<evidence type="ECO:0000250" key="1"/>
<evidence type="ECO:0000250" key="2">
    <source>
        <dbReference type="UniProtKB" id="P21963"/>
    </source>
</evidence>
<evidence type="ECO:0000255" key="3">
    <source>
        <dbReference type="PROSITE-ProRule" id="PRU00040"/>
    </source>
</evidence>
<evidence type="ECO:0000269" key="4">
    <source>
    </source>
</evidence>
<evidence type="ECO:0000269" key="5">
    <source ref="1"/>
</evidence>
<evidence type="ECO:0000305" key="6"/>
<evidence type="ECO:0000305" key="7">
    <source>
    </source>
</evidence>
<evidence type="ECO:0000305" key="8">
    <source ref="1"/>
</evidence>
<dbReference type="SMR" id="P86970"/>
<dbReference type="GO" id="GO:0005576">
    <property type="term" value="C:extracellular region"/>
    <property type="evidence" value="ECO:0007669"/>
    <property type="project" value="UniProtKB-SubCell"/>
</dbReference>
<dbReference type="GO" id="GO:0030246">
    <property type="term" value="F:carbohydrate binding"/>
    <property type="evidence" value="ECO:0007669"/>
    <property type="project" value="UniProtKB-KW"/>
</dbReference>
<dbReference type="GO" id="GO:0046872">
    <property type="term" value="F:metal ion binding"/>
    <property type="evidence" value="ECO:0007669"/>
    <property type="project" value="UniProtKB-KW"/>
</dbReference>
<dbReference type="GO" id="GO:0042742">
    <property type="term" value="P:defense response to bacterium"/>
    <property type="evidence" value="ECO:0007669"/>
    <property type="project" value="UniProtKB-KW"/>
</dbReference>
<dbReference type="CDD" id="cd03594">
    <property type="entry name" value="CLECT_REG-1_like"/>
    <property type="match status" value="1"/>
</dbReference>
<dbReference type="FunFam" id="3.10.100.10:FF:000015">
    <property type="entry name" value="C-type lectin Cal"/>
    <property type="match status" value="1"/>
</dbReference>
<dbReference type="Gene3D" id="3.10.100.10">
    <property type="entry name" value="Mannose-Binding Protein A, subunit A"/>
    <property type="match status" value="1"/>
</dbReference>
<dbReference type="InterPro" id="IPR001304">
    <property type="entry name" value="C-type_lectin-like"/>
</dbReference>
<dbReference type="InterPro" id="IPR016186">
    <property type="entry name" value="C-type_lectin-like/link_sf"/>
</dbReference>
<dbReference type="InterPro" id="IPR050111">
    <property type="entry name" value="C-type_lectin/snaclec_domain"/>
</dbReference>
<dbReference type="InterPro" id="IPR018378">
    <property type="entry name" value="C-type_lectin_CS"/>
</dbReference>
<dbReference type="InterPro" id="IPR016187">
    <property type="entry name" value="CTDL_fold"/>
</dbReference>
<dbReference type="PANTHER" id="PTHR22803">
    <property type="entry name" value="MANNOSE, PHOSPHOLIPASE, LECTIN RECEPTOR RELATED"/>
    <property type="match status" value="1"/>
</dbReference>
<dbReference type="Pfam" id="PF00059">
    <property type="entry name" value="Lectin_C"/>
    <property type="match status" value="1"/>
</dbReference>
<dbReference type="PRINTS" id="PR01504">
    <property type="entry name" value="PNCREATITSAP"/>
</dbReference>
<dbReference type="SMART" id="SM00034">
    <property type="entry name" value="CLECT"/>
    <property type="match status" value="1"/>
</dbReference>
<dbReference type="SUPFAM" id="SSF56436">
    <property type="entry name" value="C-type lectin-like"/>
    <property type="match status" value="1"/>
</dbReference>
<dbReference type="PROSITE" id="PS00615">
    <property type="entry name" value="C_TYPE_LECTIN_1"/>
    <property type="match status" value="1"/>
</dbReference>
<dbReference type="PROSITE" id="PS50041">
    <property type="entry name" value="C_TYPE_LECTIN_2"/>
    <property type="match status" value="1"/>
</dbReference>
<accession>P86970</accession>
<proteinExistence type="evidence at protein level"/>
<sequence length="135" mass="16223">NNCPQDWLPMNGLCYKIFDELKAWKDAEMFCRKYKPGCHLASIHLYGESPEIAEYISDYHKGQSEVWIGLWDEKKDFSWEWTDRSCTDYLSWDKNQPDHYKNKEFCVELVSYTGYRLWNDQVCESKNAFLCQCKF</sequence>
<name>LECG_BOTPA</name>
<comment type="function">
    <text evidence="4 5">This lectin displays hemagglutinating activity on dog (128'000 HU/mg) and cat erythrocytes, that is inhibited by beta-galactosides (D-galactose, D-lactose, and N-acetyl-D-galactosamine) and EDTA. In addition, has been shown to hemagglutinate promastigote forms of Leishmania amazonensis. Also inhibits Gram-positive (S.aureus ATCC 25923) (MIC is 31.25 ug/ml) but not Gram-negative (E.coli ATCC 25922) bacteria. Is a calcium-dependent lectin.</text>
</comment>
<comment type="subunit">
    <text evidence="4">Homodimer; disulfide-linked.</text>
</comment>
<comment type="subcellular location">
    <subcellularLocation>
        <location evidence="5">Secreted</location>
    </subcellularLocation>
</comment>
<comment type="tissue specificity">
    <text evidence="8">Expressed by the venom gland.</text>
</comment>
<comment type="mass spectrometry" mass="16800.0" method="MALDI" evidence="4"/>
<comment type="miscellaneous">
    <text evidence="7">Negative results: does not agglutinate erythrocytes from horse, ox and mouse at doses up to 800 ug/ml.</text>
</comment>
<comment type="miscellaneous">
    <text evidence="7">Negative results: hemagglutinin activity is not inhibited by D-fructose, D-maltose, D-mannose, and D-sucrose.</text>
</comment>
<comment type="similarity">
    <text evidence="6">Belongs to the true venom lectin family.</text>
</comment>
<comment type="caution">
    <text evidence="6">The same name (BpL) has been given to a lectin from Bothrops pirajai (AC P0DL30).</text>
</comment>
<reference key="1">
    <citation type="submission" date="2011-06" db="UniProtKB">
        <authorList>
            <person name="Castanheira L.E."/>
            <person name="Richardson M."/>
            <person name="Borges M.H."/>
            <person name="Rodrigues V.M."/>
        </authorList>
    </citation>
    <scope>PROTEIN SEQUENCE</scope>
    <scope>FUNCTION</scope>
    <scope>SUBCELLULAR LOCATION</scope>
    <source>
        <tissue>Venom</tissue>
    </source>
</reference>
<reference key="2">
    <citation type="journal article" date="2013" name="Int. J. Biol. Macromol.">
        <title>Biochemical and functional characterization of a C-type lectin (BpLec) from Bothrops pauloensis snake venom.</title>
        <authorList>
            <person name="Castanheira L.E."/>
            <person name="Nunes D.C."/>
            <person name="Cardoso T.M."/>
            <person name="Santos Pde S."/>
            <person name="Goulart L.R."/>
            <person name="Rodrigues R.S."/>
            <person name="Richardson M."/>
            <person name="Borges M.H."/>
            <person name="Yoneyama K.A."/>
            <person name="Rodrigues V.M."/>
        </authorList>
    </citation>
    <scope>PROTEIN SEQUENCE</scope>
    <scope>FUNCTION</scope>
    <scope>SUBUNIT</scope>
    <scope>MASS SPECTROMETRY</scope>
    <source>
        <tissue>Venom</tissue>
    </source>
</reference>
<reference key="3">
    <citation type="journal article" date="2012" name="J. Proteomics">
        <title>Combined snake venomics and venom gland transcriptomic analysis of Bothropoides pauloensis.</title>
        <authorList>
            <person name="Rodrigues R.S."/>
            <person name="Boldrini-Franca J."/>
            <person name="Fonseca F.P."/>
            <person name="de la Torre P."/>
            <person name="Henrique-Silva F."/>
            <person name="Sanz L."/>
            <person name="Calvete J.J."/>
            <person name="Rodrigues V.M."/>
        </authorList>
    </citation>
    <scope>PROTEIN SEQUENCE OF 1-10</scope>
    <scope>IDENTIFICATION BY MASS SPECTROMETRY</scope>
    <source>
        <tissue>Venom</tissue>
    </source>
</reference>
<protein>
    <recommendedName>
        <fullName>C-type lectin BpLec</fullName>
        <shortName>BpL</shortName>
        <shortName>CTL</shortName>
    </recommendedName>
</protein>
<feature type="chain" id="PRO_0000412757" description="C-type lectin BpLec">
    <location>
        <begin position="1"/>
        <end position="135"/>
    </location>
</feature>
<feature type="domain" description="C-type lectin" evidence="3">
    <location>
        <begin position="10"/>
        <end position="132"/>
    </location>
</feature>
<feature type="short sequence motif" description="Galactose-binding">
    <location>
        <begin position="96"/>
        <end position="98"/>
    </location>
</feature>
<feature type="binding site" evidence="1">
    <location>
        <position position="96"/>
    </location>
    <ligand>
        <name>Ca(2+)</name>
        <dbReference type="ChEBI" id="CHEBI:29108"/>
    </ligand>
</feature>
<feature type="binding site" evidence="1">
    <location>
        <position position="98"/>
    </location>
    <ligand>
        <name>Ca(2+)</name>
        <dbReference type="ChEBI" id="CHEBI:29108"/>
    </ligand>
</feature>
<feature type="binding site" evidence="1">
    <location>
        <position position="104"/>
    </location>
    <ligand>
        <name>Ca(2+)</name>
        <dbReference type="ChEBI" id="CHEBI:29108"/>
    </ligand>
</feature>
<feature type="binding site" evidence="1">
    <location>
        <position position="119"/>
    </location>
    <ligand>
        <name>Ca(2+)</name>
        <dbReference type="ChEBI" id="CHEBI:29108"/>
    </ligand>
</feature>
<feature type="binding site" evidence="1">
    <location>
        <position position="120"/>
    </location>
    <ligand>
        <name>Ca(2+)</name>
        <dbReference type="ChEBI" id="CHEBI:29108"/>
    </ligand>
</feature>
<feature type="disulfide bond" evidence="2 3">
    <location>
        <begin position="3"/>
        <end position="14"/>
    </location>
</feature>
<feature type="disulfide bond" evidence="3">
    <location>
        <begin position="31"/>
        <end position="131"/>
    </location>
</feature>
<feature type="disulfide bond" evidence="3">
    <location>
        <begin position="38"/>
        <end position="133"/>
    </location>
</feature>
<feature type="disulfide bond" description="Interchain" evidence="3">
    <location>
        <position position="86"/>
    </location>
</feature>
<feature type="disulfide bond" evidence="3">
    <location>
        <begin position="106"/>
        <end position="123"/>
    </location>
</feature>
<feature type="unsure residue" description="Assigned by comparison with orthologs">
    <location>
        <position position="62"/>
    </location>
</feature>
<feature type="unsure residue" description="Assigned by comparison with orthologs">
    <location>
        <position position="63"/>
    </location>
</feature>
<feature type="unsure residue" description="Assigned by comparison with orthologs">
    <location>
        <position position="135"/>
    </location>
</feature>
<organism>
    <name type="scientific">Bothrops pauloensis</name>
    <name type="common">Neuwied's lancehead</name>
    <name type="synonym">Bothrops neuwiedi pauloensis</name>
    <dbReference type="NCBI Taxonomy" id="1042543"/>
    <lineage>
        <taxon>Eukaryota</taxon>
        <taxon>Metazoa</taxon>
        <taxon>Chordata</taxon>
        <taxon>Craniata</taxon>
        <taxon>Vertebrata</taxon>
        <taxon>Euteleostomi</taxon>
        <taxon>Lepidosauria</taxon>
        <taxon>Squamata</taxon>
        <taxon>Bifurcata</taxon>
        <taxon>Unidentata</taxon>
        <taxon>Episquamata</taxon>
        <taxon>Toxicofera</taxon>
        <taxon>Serpentes</taxon>
        <taxon>Colubroidea</taxon>
        <taxon>Viperidae</taxon>
        <taxon>Crotalinae</taxon>
        <taxon>Bothrops</taxon>
    </lineage>
</organism>
<keyword id="KW-0044">Antibiotic</keyword>
<keyword id="KW-0929">Antimicrobial</keyword>
<keyword id="KW-0106">Calcium</keyword>
<keyword id="KW-0903">Direct protein sequencing</keyword>
<keyword id="KW-1015">Disulfide bond</keyword>
<keyword id="KW-0348">Hemagglutinin</keyword>
<keyword id="KW-0430">Lectin</keyword>
<keyword id="KW-0479">Metal-binding</keyword>
<keyword id="KW-0964">Secreted</keyword>